<reference key="1">
    <citation type="journal article" date="2002" name="Proc. Natl. Acad. Sci. U.S.A.">
        <title>Extensive mosaic structure revealed by the complete genome sequence of uropathogenic Escherichia coli.</title>
        <authorList>
            <person name="Welch R.A."/>
            <person name="Burland V."/>
            <person name="Plunkett G. III"/>
            <person name="Redford P."/>
            <person name="Roesch P."/>
            <person name="Rasko D."/>
            <person name="Buckles E.L."/>
            <person name="Liou S.-R."/>
            <person name="Boutin A."/>
            <person name="Hackett J."/>
            <person name="Stroud D."/>
            <person name="Mayhew G.F."/>
            <person name="Rose D.J."/>
            <person name="Zhou S."/>
            <person name="Schwartz D.C."/>
            <person name="Perna N.T."/>
            <person name="Mobley H.L.T."/>
            <person name="Donnenberg M.S."/>
            <person name="Blattner F.R."/>
        </authorList>
    </citation>
    <scope>NUCLEOTIDE SEQUENCE [LARGE SCALE GENOMIC DNA]</scope>
    <source>
        <strain>CFT073 / ATCC 700928 / UPEC</strain>
    </source>
</reference>
<comment type="function">
    <text evidence="1">Involved in the degradation of certain denaturated proteins, including DnaA, during heat shock stress.</text>
</comment>
<comment type="subcellular location">
    <subcellularLocation>
        <location evidence="1">Cytoplasm</location>
    </subcellularLocation>
</comment>
<comment type="similarity">
    <text evidence="1">Belongs to the HspQ family.</text>
</comment>
<comment type="sequence caution" evidence="3">
    <conflict type="erroneous initiation">
        <sequence resource="EMBL-CDS" id="AAN79572"/>
    </conflict>
</comment>
<evidence type="ECO:0000255" key="1">
    <source>
        <dbReference type="HAMAP-Rule" id="MF_01194"/>
    </source>
</evidence>
<evidence type="ECO:0000256" key="2">
    <source>
        <dbReference type="SAM" id="MobiDB-lite"/>
    </source>
</evidence>
<evidence type="ECO:0000305" key="3"/>
<proteinExistence type="inferred from homology"/>
<dbReference type="EMBL" id="AE014075">
    <property type="protein sequence ID" value="AAN79572.1"/>
    <property type="status" value="ALT_INIT"/>
    <property type="molecule type" value="Genomic_DNA"/>
</dbReference>
<dbReference type="RefSeq" id="WP_001295356.1">
    <property type="nucleotide sequence ID" value="NZ_CP051263.1"/>
</dbReference>
<dbReference type="SMR" id="P0AB21"/>
<dbReference type="STRING" id="199310.c1104"/>
<dbReference type="GeneID" id="93776448"/>
<dbReference type="KEGG" id="ecc:c1104"/>
<dbReference type="eggNOG" id="COG3785">
    <property type="taxonomic scope" value="Bacteria"/>
</dbReference>
<dbReference type="HOGENOM" id="CLU_123865_1_0_6"/>
<dbReference type="Proteomes" id="UP000001410">
    <property type="component" value="Chromosome"/>
</dbReference>
<dbReference type="GO" id="GO:0005737">
    <property type="term" value="C:cytoplasm"/>
    <property type="evidence" value="ECO:0007669"/>
    <property type="project" value="UniProtKB-SubCell"/>
</dbReference>
<dbReference type="GO" id="GO:0003677">
    <property type="term" value="F:DNA binding"/>
    <property type="evidence" value="ECO:0007669"/>
    <property type="project" value="InterPro"/>
</dbReference>
<dbReference type="GO" id="GO:0009408">
    <property type="term" value="P:response to heat"/>
    <property type="evidence" value="ECO:0007669"/>
    <property type="project" value="UniProtKB-UniRule"/>
</dbReference>
<dbReference type="Gene3D" id="2.30.30.390">
    <property type="entry name" value="Hemimethylated DNA-binding domain"/>
    <property type="match status" value="1"/>
</dbReference>
<dbReference type="HAMAP" id="MF_01194">
    <property type="entry name" value="HspQ"/>
    <property type="match status" value="1"/>
</dbReference>
<dbReference type="InterPro" id="IPR011722">
    <property type="entry name" value="Hemimethylated_DNA-bd_dom"/>
</dbReference>
<dbReference type="InterPro" id="IPR036623">
    <property type="entry name" value="Hemimethylated_DNA-bd_sf"/>
</dbReference>
<dbReference type="InterPro" id="IPR022866">
    <property type="entry name" value="HspQ"/>
</dbReference>
<dbReference type="NCBIfam" id="NF010729">
    <property type="entry name" value="PRK14129.1"/>
    <property type="match status" value="1"/>
</dbReference>
<dbReference type="NCBIfam" id="TIGR02097">
    <property type="entry name" value="yccV"/>
    <property type="match status" value="1"/>
</dbReference>
<dbReference type="Pfam" id="PF08755">
    <property type="entry name" value="YccV-like"/>
    <property type="match status" value="1"/>
</dbReference>
<dbReference type="SMART" id="SM00992">
    <property type="entry name" value="YccV-like"/>
    <property type="match status" value="1"/>
</dbReference>
<dbReference type="SUPFAM" id="SSF141255">
    <property type="entry name" value="YccV-like"/>
    <property type="match status" value="1"/>
</dbReference>
<organism>
    <name type="scientific">Escherichia coli O6:H1 (strain CFT073 / ATCC 700928 / UPEC)</name>
    <dbReference type="NCBI Taxonomy" id="199310"/>
    <lineage>
        <taxon>Bacteria</taxon>
        <taxon>Pseudomonadati</taxon>
        <taxon>Pseudomonadota</taxon>
        <taxon>Gammaproteobacteria</taxon>
        <taxon>Enterobacterales</taxon>
        <taxon>Enterobacteriaceae</taxon>
        <taxon>Escherichia</taxon>
    </lineage>
</organism>
<protein>
    <recommendedName>
        <fullName evidence="1">Heat shock protein HspQ</fullName>
    </recommendedName>
</protein>
<feature type="chain" id="PRO_0000168797" description="Heat shock protein HspQ">
    <location>
        <begin position="1"/>
        <end position="105"/>
    </location>
</feature>
<feature type="region of interest" description="Disordered" evidence="2">
    <location>
        <begin position="75"/>
        <end position="105"/>
    </location>
</feature>
<name>HSPQ_ECOL6</name>
<gene>
    <name evidence="1" type="primary">hspQ</name>
    <name type="ordered locus">c1104</name>
</gene>
<sequence>MIASKFGIGQQVRHSLLGYLGVVVDIDPVYSLSEPSPDELAVNDELRAAPWYHVVMEDDNGLPVHTYLAEAQLSSELQDEHPEQPSMDELAQTIRKQLQAPRLRN</sequence>
<keyword id="KW-0963">Cytoplasm</keyword>
<keyword id="KW-1185">Reference proteome</keyword>
<keyword id="KW-0346">Stress response</keyword>
<accession>P0AB21</accession>
<accession>P75875</accession>